<comment type="function">
    <text evidence="1">Catalyzes the initial step of the lipid cycle reactions in the biosynthesis of the cell wall peptidoglycan: transfers peptidoglycan precursor phospho-MurNAc-pentapeptide from UDP-MurNAc-pentapeptide onto the lipid carrier undecaprenyl phosphate, yielding undecaprenyl-pyrophosphoryl-MurNAc-pentapeptide, known as lipid I.</text>
</comment>
<comment type="catalytic activity">
    <reaction evidence="1">
        <text>UDP-N-acetyl-alpha-D-muramoyl-L-alanyl-gamma-D-glutamyl-meso-2,6-diaminopimeloyl-D-alanyl-D-alanine + di-trans,octa-cis-undecaprenyl phosphate = di-trans,octa-cis-undecaprenyl diphospho-N-acetyl-alpha-D-muramoyl-L-alanyl-D-glutamyl-meso-2,6-diaminopimeloyl-D-alanyl-D-alanine + UMP</text>
        <dbReference type="Rhea" id="RHEA:28386"/>
        <dbReference type="ChEBI" id="CHEBI:57865"/>
        <dbReference type="ChEBI" id="CHEBI:60392"/>
        <dbReference type="ChEBI" id="CHEBI:61386"/>
        <dbReference type="ChEBI" id="CHEBI:61387"/>
        <dbReference type="EC" id="2.7.8.13"/>
    </reaction>
</comment>
<comment type="cofactor">
    <cofactor evidence="1">
        <name>Mg(2+)</name>
        <dbReference type="ChEBI" id="CHEBI:18420"/>
    </cofactor>
</comment>
<comment type="pathway">
    <text evidence="1">Cell wall biogenesis; peptidoglycan biosynthesis.</text>
</comment>
<comment type="subcellular location">
    <subcellularLocation>
        <location evidence="1">Cell inner membrane</location>
        <topology evidence="1">Multi-pass membrane protein</topology>
    </subcellularLocation>
</comment>
<comment type="similarity">
    <text evidence="1">Belongs to the glycosyltransferase 4 family. MraY subfamily.</text>
</comment>
<dbReference type="EC" id="2.7.8.13" evidence="1"/>
<dbReference type="EMBL" id="CP001322">
    <property type="protein sequence ID" value="ACL04824.1"/>
    <property type="molecule type" value="Genomic_DNA"/>
</dbReference>
<dbReference type="RefSeq" id="WP_015947884.1">
    <property type="nucleotide sequence ID" value="NC_011768.1"/>
</dbReference>
<dbReference type="SMR" id="B8FBS1"/>
<dbReference type="KEGG" id="dal:Dalk_3134"/>
<dbReference type="eggNOG" id="COG0472">
    <property type="taxonomic scope" value="Bacteria"/>
</dbReference>
<dbReference type="HOGENOM" id="CLU_023982_0_0_7"/>
<dbReference type="UniPathway" id="UPA00219"/>
<dbReference type="Proteomes" id="UP000000739">
    <property type="component" value="Chromosome"/>
</dbReference>
<dbReference type="GO" id="GO:0005886">
    <property type="term" value="C:plasma membrane"/>
    <property type="evidence" value="ECO:0007669"/>
    <property type="project" value="UniProtKB-SubCell"/>
</dbReference>
<dbReference type="GO" id="GO:0046872">
    <property type="term" value="F:metal ion binding"/>
    <property type="evidence" value="ECO:0007669"/>
    <property type="project" value="UniProtKB-KW"/>
</dbReference>
<dbReference type="GO" id="GO:0008963">
    <property type="term" value="F:phospho-N-acetylmuramoyl-pentapeptide-transferase activity"/>
    <property type="evidence" value="ECO:0007669"/>
    <property type="project" value="UniProtKB-UniRule"/>
</dbReference>
<dbReference type="GO" id="GO:0051992">
    <property type="term" value="F:UDP-N-acetylmuramoyl-L-alanyl-D-glutamyl-meso-2,6-diaminopimelyl-D-alanyl-D-alanine:undecaprenyl-phosphate transferase activity"/>
    <property type="evidence" value="ECO:0007669"/>
    <property type="project" value="RHEA"/>
</dbReference>
<dbReference type="GO" id="GO:0051301">
    <property type="term" value="P:cell division"/>
    <property type="evidence" value="ECO:0007669"/>
    <property type="project" value="UniProtKB-KW"/>
</dbReference>
<dbReference type="GO" id="GO:0071555">
    <property type="term" value="P:cell wall organization"/>
    <property type="evidence" value="ECO:0007669"/>
    <property type="project" value="UniProtKB-KW"/>
</dbReference>
<dbReference type="GO" id="GO:0009252">
    <property type="term" value="P:peptidoglycan biosynthetic process"/>
    <property type="evidence" value="ECO:0007669"/>
    <property type="project" value="UniProtKB-UniRule"/>
</dbReference>
<dbReference type="GO" id="GO:0008360">
    <property type="term" value="P:regulation of cell shape"/>
    <property type="evidence" value="ECO:0007669"/>
    <property type="project" value="UniProtKB-KW"/>
</dbReference>
<dbReference type="CDD" id="cd06852">
    <property type="entry name" value="GT_MraY"/>
    <property type="match status" value="1"/>
</dbReference>
<dbReference type="HAMAP" id="MF_00038">
    <property type="entry name" value="MraY"/>
    <property type="match status" value="1"/>
</dbReference>
<dbReference type="InterPro" id="IPR000715">
    <property type="entry name" value="Glycosyl_transferase_4"/>
</dbReference>
<dbReference type="InterPro" id="IPR003524">
    <property type="entry name" value="PNAcMuramoyl-5peptid_Trfase"/>
</dbReference>
<dbReference type="InterPro" id="IPR018480">
    <property type="entry name" value="PNAcMuramoyl-5peptid_Trfase_CS"/>
</dbReference>
<dbReference type="NCBIfam" id="TIGR00445">
    <property type="entry name" value="mraY"/>
    <property type="match status" value="1"/>
</dbReference>
<dbReference type="PANTHER" id="PTHR22926">
    <property type="entry name" value="PHOSPHO-N-ACETYLMURAMOYL-PENTAPEPTIDE-TRANSFERASE"/>
    <property type="match status" value="1"/>
</dbReference>
<dbReference type="PANTHER" id="PTHR22926:SF5">
    <property type="entry name" value="PHOSPHO-N-ACETYLMURAMOYL-PENTAPEPTIDE-TRANSFERASE HOMOLOG"/>
    <property type="match status" value="1"/>
</dbReference>
<dbReference type="Pfam" id="PF00953">
    <property type="entry name" value="Glycos_transf_4"/>
    <property type="match status" value="1"/>
</dbReference>
<dbReference type="Pfam" id="PF10555">
    <property type="entry name" value="MraY_sig1"/>
    <property type="match status" value="1"/>
</dbReference>
<dbReference type="PROSITE" id="PS01347">
    <property type="entry name" value="MRAY_1"/>
    <property type="match status" value="1"/>
</dbReference>
<dbReference type="PROSITE" id="PS01348">
    <property type="entry name" value="MRAY_2"/>
    <property type="match status" value="1"/>
</dbReference>
<name>MRAY_DESAL</name>
<proteinExistence type="inferred from homology"/>
<accession>B8FBS1</accession>
<feature type="chain" id="PRO_1000116510" description="Phospho-N-acetylmuramoyl-pentapeptide-transferase">
    <location>
        <begin position="1"/>
        <end position="360"/>
    </location>
</feature>
<feature type="transmembrane region" description="Helical" evidence="1">
    <location>
        <begin position="25"/>
        <end position="45"/>
    </location>
</feature>
<feature type="transmembrane region" description="Helical" evidence="1">
    <location>
        <begin position="73"/>
        <end position="93"/>
    </location>
</feature>
<feature type="transmembrane region" description="Helical" evidence="1">
    <location>
        <begin position="94"/>
        <end position="114"/>
    </location>
</feature>
<feature type="transmembrane region" description="Helical" evidence="1">
    <location>
        <begin position="134"/>
        <end position="154"/>
    </location>
</feature>
<feature type="transmembrane region" description="Helical" evidence="1">
    <location>
        <begin position="173"/>
        <end position="193"/>
    </location>
</feature>
<feature type="transmembrane region" description="Helical" evidence="1">
    <location>
        <begin position="198"/>
        <end position="218"/>
    </location>
</feature>
<feature type="transmembrane region" description="Helical" evidence="1">
    <location>
        <begin position="240"/>
        <end position="260"/>
    </location>
</feature>
<feature type="transmembrane region" description="Helical" evidence="1">
    <location>
        <begin position="262"/>
        <end position="282"/>
    </location>
</feature>
<feature type="transmembrane region" description="Helical" evidence="1">
    <location>
        <begin position="287"/>
        <end position="307"/>
    </location>
</feature>
<feature type="transmembrane region" description="Helical" evidence="1">
    <location>
        <begin position="337"/>
        <end position="357"/>
    </location>
</feature>
<organism>
    <name type="scientific">Desulfatibacillum aliphaticivorans</name>
    <dbReference type="NCBI Taxonomy" id="218208"/>
    <lineage>
        <taxon>Bacteria</taxon>
        <taxon>Pseudomonadati</taxon>
        <taxon>Thermodesulfobacteriota</taxon>
        <taxon>Desulfobacteria</taxon>
        <taxon>Desulfobacterales</taxon>
        <taxon>Desulfatibacillaceae</taxon>
        <taxon>Desulfatibacillum</taxon>
    </lineage>
</organism>
<keyword id="KW-0131">Cell cycle</keyword>
<keyword id="KW-0132">Cell division</keyword>
<keyword id="KW-0997">Cell inner membrane</keyword>
<keyword id="KW-1003">Cell membrane</keyword>
<keyword id="KW-0133">Cell shape</keyword>
<keyword id="KW-0961">Cell wall biogenesis/degradation</keyword>
<keyword id="KW-0460">Magnesium</keyword>
<keyword id="KW-0472">Membrane</keyword>
<keyword id="KW-0479">Metal-binding</keyword>
<keyword id="KW-0573">Peptidoglycan synthesis</keyword>
<keyword id="KW-1185">Reference proteome</keyword>
<keyword id="KW-0808">Transferase</keyword>
<keyword id="KW-0812">Transmembrane</keyword>
<keyword id="KW-1133">Transmembrane helix</keyword>
<evidence type="ECO:0000255" key="1">
    <source>
        <dbReference type="HAMAP-Rule" id="MF_00038"/>
    </source>
</evidence>
<gene>
    <name evidence="1" type="primary">mraY</name>
    <name type="ordered locus">Dalk_3134</name>
</gene>
<protein>
    <recommendedName>
        <fullName evidence="1">Phospho-N-acetylmuramoyl-pentapeptide-transferase</fullName>
        <ecNumber evidence="1">2.7.8.13</ecNumber>
    </recommendedName>
    <alternativeName>
        <fullName evidence="1">UDP-MurNAc-pentapeptide phosphotransferase</fullName>
    </alternativeName>
</protein>
<reference key="1">
    <citation type="journal article" date="2012" name="Environ. Microbiol.">
        <title>The genome sequence of Desulfatibacillum alkenivorans AK-01: a blueprint for anaerobic alkane oxidation.</title>
        <authorList>
            <person name="Callaghan A.V."/>
            <person name="Morris B.E."/>
            <person name="Pereira I.A."/>
            <person name="McInerney M.J."/>
            <person name="Austin R.N."/>
            <person name="Groves J.T."/>
            <person name="Kukor J.J."/>
            <person name="Suflita J.M."/>
            <person name="Young L.Y."/>
            <person name="Zylstra G.J."/>
            <person name="Wawrik B."/>
        </authorList>
    </citation>
    <scope>NUCLEOTIDE SEQUENCE [LARGE SCALE GENOMIC DNA]</scope>
    <source>
        <strain>AK-01</strain>
    </source>
</reference>
<sequence length="360" mass="39295">MLYHLLTPLAKYMTVFNVFRYITFRTIYASLTALVISFVLGPWLIRKLGEMQVGQHIREDGPQTHLKKAGTPTMGGVLIMSAVMFSTLLWADLTNAYVWIALGVTFGFGLIGFVDDYLMQVKKRSKGLSARGKFCLQVVVAGIAGTVLVYGLNGDTTVNIPFFKNLNPDLTRPGYVLFAILVMVGASNAVNLTDGLDGLAIVPVAIAAGTYMIFAYVASHYDFATYLSIRHVPQSGEMSVFCGALVGAGLGFLWYNAYPAQIFMGDVGSLPLGGALGVVAILTKQELALVIVGGLFVMEAVSVILQVSFFKITKGKRIFKMAPIHHHFELKGWPEPKVIVRFWIIAIMLALLSVSTLKLR</sequence>